<feature type="chain" id="PRO_0000386792" description="Ribosomal RNA small subunit methyltransferase H">
    <location>
        <begin position="1"/>
        <end position="322"/>
    </location>
</feature>
<feature type="binding site" evidence="1">
    <location>
        <begin position="43"/>
        <end position="45"/>
    </location>
    <ligand>
        <name>S-adenosyl-L-methionine</name>
        <dbReference type="ChEBI" id="CHEBI:59789"/>
    </ligand>
</feature>
<feature type="binding site" evidence="1">
    <location>
        <position position="60"/>
    </location>
    <ligand>
        <name>S-adenosyl-L-methionine</name>
        <dbReference type="ChEBI" id="CHEBI:59789"/>
    </ligand>
</feature>
<feature type="binding site" evidence="1">
    <location>
        <position position="86"/>
    </location>
    <ligand>
        <name>S-adenosyl-L-methionine</name>
        <dbReference type="ChEBI" id="CHEBI:59789"/>
    </ligand>
</feature>
<feature type="binding site" evidence="1">
    <location>
        <position position="104"/>
    </location>
    <ligand>
        <name>S-adenosyl-L-methionine</name>
        <dbReference type="ChEBI" id="CHEBI:59789"/>
    </ligand>
</feature>
<feature type="binding site" evidence="1">
    <location>
        <position position="111"/>
    </location>
    <ligand>
        <name>S-adenosyl-L-methionine</name>
        <dbReference type="ChEBI" id="CHEBI:59789"/>
    </ligand>
</feature>
<sequence>MSDLEPAKNPEGASHVSVLLGEVVAALASGPGDMVIDGTFGAGGYTRAILATGASVTAFDRDPSVQRFAAEFSATDGRFRLIQDRFSQITEYLEDASVDGVTLDLGVSSMQLDEAERGFSFMRDGPLDMRMGADGPTAADLVNDLDHTELARILYVYGEEHASRRIASFIIKRREERPFTRTLDLAHVIERALGGRKGAKVHPATRSFQGLRIAVNAELDELEAGLLAAERVLKPGGRLAVVTFHSLEDRIVKNFLAERAGRTPGGSRHLPPVEAGAPPSFQLISSKAIAPGEAELAVNPRARSSKLRAAVRTTAPVWSEAS</sequence>
<accession>B0T839</accession>
<comment type="function">
    <text evidence="1">Specifically methylates the N4 position of cytidine in position 1402 (C1402) of 16S rRNA.</text>
</comment>
<comment type="catalytic activity">
    <reaction evidence="1">
        <text>cytidine(1402) in 16S rRNA + S-adenosyl-L-methionine = N(4)-methylcytidine(1402) in 16S rRNA + S-adenosyl-L-homocysteine + H(+)</text>
        <dbReference type="Rhea" id="RHEA:42928"/>
        <dbReference type="Rhea" id="RHEA-COMP:10286"/>
        <dbReference type="Rhea" id="RHEA-COMP:10287"/>
        <dbReference type="ChEBI" id="CHEBI:15378"/>
        <dbReference type="ChEBI" id="CHEBI:57856"/>
        <dbReference type="ChEBI" id="CHEBI:59789"/>
        <dbReference type="ChEBI" id="CHEBI:74506"/>
        <dbReference type="ChEBI" id="CHEBI:82748"/>
        <dbReference type="EC" id="2.1.1.199"/>
    </reaction>
</comment>
<comment type="subcellular location">
    <subcellularLocation>
        <location evidence="1">Cytoplasm</location>
    </subcellularLocation>
</comment>
<comment type="similarity">
    <text evidence="1">Belongs to the methyltransferase superfamily. RsmH family.</text>
</comment>
<dbReference type="EC" id="2.1.1.199" evidence="1"/>
<dbReference type="EMBL" id="CP000927">
    <property type="protein sequence ID" value="ABZ72802.1"/>
    <property type="molecule type" value="Genomic_DNA"/>
</dbReference>
<dbReference type="SMR" id="B0T839"/>
<dbReference type="STRING" id="366602.Caul_3675"/>
<dbReference type="KEGG" id="cak:Caul_3675"/>
<dbReference type="eggNOG" id="COG0275">
    <property type="taxonomic scope" value="Bacteria"/>
</dbReference>
<dbReference type="HOGENOM" id="CLU_038422_1_1_5"/>
<dbReference type="OrthoDB" id="9806637at2"/>
<dbReference type="GO" id="GO:0005737">
    <property type="term" value="C:cytoplasm"/>
    <property type="evidence" value="ECO:0007669"/>
    <property type="project" value="UniProtKB-SubCell"/>
</dbReference>
<dbReference type="GO" id="GO:0071424">
    <property type="term" value="F:rRNA (cytosine-N4-)-methyltransferase activity"/>
    <property type="evidence" value="ECO:0007669"/>
    <property type="project" value="UniProtKB-UniRule"/>
</dbReference>
<dbReference type="GO" id="GO:0070475">
    <property type="term" value="P:rRNA base methylation"/>
    <property type="evidence" value="ECO:0007669"/>
    <property type="project" value="UniProtKB-UniRule"/>
</dbReference>
<dbReference type="Gene3D" id="1.10.150.170">
    <property type="entry name" value="Putative methyltransferase TM0872, insert domain"/>
    <property type="match status" value="1"/>
</dbReference>
<dbReference type="Gene3D" id="3.40.50.150">
    <property type="entry name" value="Vaccinia Virus protein VP39"/>
    <property type="match status" value="1"/>
</dbReference>
<dbReference type="HAMAP" id="MF_01007">
    <property type="entry name" value="16SrRNA_methyltr_H"/>
    <property type="match status" value="1"/>
</dbReference>
<dbReference type="InterPro" id="IPR002903">
    <property type="entry name" value="RsmH"/>
</dbReference>
<dbReference type="InterPro" id="IPR023397">
    <property type="entry name" value="SAM-dep_MeTrfase_MraW_recog"/>
</dbReference>
<dbReference type="InterPro" id="IPR029063">
    <property type="entry name" value="SAM-dependent_MTases_sf"/>
</dbReference>
<dbReference type="NCBIfam" id="TIGR00006">
    <property type="entry name" value="16S rRNA (cytosine(1402)-N(4))-methyltransferase RsmH"/>
    <property type="match status" value="1"/>
</dbReference>
<dbReference type="PANTHER" id="PTHR11265:SF0">
    <property type="entry name" value="12S RRNA N4-METHYLCYTIDINE METHYLTRANSFERASE"/>
    <property type="match status" value="1"/>
</dbReference>
<dbReference type="PANTHER" id="PTHR11265">
    <property type="entry name" value="S-ADENOSYL-METHYLTRANSFERASE MRAW"/>
    <property type="match status" value="1"/>
</dbReference>
<dbReference type="Pfam" id="PF01795">
    <property type="entry name" value="Methyltransf_5"/>
    <property type="match status" value="1"/>
</dbReference>
<dbReference type="PIRSF" id="PIRSF004486">
    <property type="entry name" value="MraW"/>
    <property type="match status" value="1"/>
</dbReference>
<dbReference type="SUPFAM" id="SSF81799">
    <property type="entry name" value="Putative methyltransferase TM0872, insert domain"/>
    <property type="match status" value="1"/>
</dbReference>
<dbReference type="SUPFAM" id="SSF53335">
    <property type="entry name" value="S-adenosyl-L-methionine-dependent methyltransferases"/>
    <property type="match status" value="1"/>
</dbReference>
<name>RSMH_CAUSK</name>
<keyword id="KW-0963">Cytoplasm</keyword>
<keyword id="KW-0489">Methyltransferase</keyword>
<keyword id="KW-0698">rRNA processing</keyword>
<keyword id="KW-0949">S-adenosyl-L-methionine</keyword>
<keyword id="KW-0808">Transferase</keyword>
<organism>
    <name type="scientific">Caulobacter sp. (strain K31)</name>
    <dbReference type="NCBI Taxonomy" id="366602"/>
    <lineage>
        <taxon>Bacteria</taxon>
        <taxon>Pseudomonadati</taxon>
        <taxon>Pseudomonadota</taxon>
        <taxon>Alphaproteobacteria</taxon>
        <taxon>Caulobacterales</taxon>
        <taxon>Caulobacteraceae</taxon>
        <taxon>Caulobacter</taxon>
    </lineage>
</organism>
<proteinExistence type="inferred from homology"/>
<evidence type="ECO:0000255" key="1">
    <source>
        <dbReference type="HAMAP-Rule" id="MF_01007"/>
    </source>
</evidence>
<gene>
    <name evidence="1" type="primary">rsmH</name>
    <name type="synonym">mraW</name>
    <name type="ordered locus">Caul_3675</name>
</gene>
<protein>
    <recommendedName>
        <fullName evidence="1">Ribosomal RNA small subunit methyltransferase H</fullName>
        <ecNumber evidence="1">2.1.1.199</ecNumber>
    </recommendedName>
    <alternativeName>
        <fullName evidence="1">16S rRNA m(4)C1402 methyltransferase</fullName>
    </alternativeName>
    <alternativeName>
        <fullName evidence="1">rRNA (cytosine-N(4)-)-methyltransferase RsmH</fullName>
    </alternativeName>
</protein>
<reference key="1">
    <citation type="submission" date="2008-01" db="EMBL/GenBank/DDBJ databases">
        <title>Complete sequence of chromosome of Caulobacter sp. K31.</title>
        <authorList>
            <consortium name="US DOE Joint Genome Institute"/>
            <person name="Copeland A."/>
            <person name="Lucas S."/>
            <person name="Lapidus A."/>
            <person name="Barry K."/>
            <person name="Glavina del Rio T."/>
            <person name="Dalin E."/>
            <person name="Tice H."/>
            <person name="Pitluck S."/>
            <person name="Bruce D."/>
            <person name="Goodwin L."/>
            <person name="Thompson L.S."/>
            <person name="Brettin T."/>
            <person name="Detter J.C."/>
            <person name="Han C."/>
            <person name="Schmutz J."/>
            <person name="Larimer F."/>
            <person name="Land M."/>
            <person name="Hauser L."/>
            <person name="Kyrpides N."/>
            <person name="Kim E."/>
            <person name="Stephens C."/>
            <person name="Richardson P."/>
        </authorList>
    </citation>
    <scope>NUCLEOTIDE SEQUENCE [LARGE SCALE GENOMIC DNA]</scope>
    <source>
        <strain>K31</strain>
    </source>
</reference>